<sequence length="242" mass="27117">MTKLFIPYIMGNKDLIENATLLSENGADIIEIGVPFSDPVADGPVIMEAGQQAIKQGITIDYIFNQLEKHGDQIKCNYVLMTYYNIICHYGEQAFFEKCRDTGVYGLIIPDLPYELSQRLKQQFSHYGVKIISLVAMTTDDKRIKDIVSHAEGFIYTVTMNATTGQNGAFHPELKRKIESIKAIANVPVVAGFGIRTPQHVADIKEVADGIVIGSEIVKRFKSNTREEIIKYLQSIQQTLNN</sequence>
<comment type="function">
    <text evidence="1">The alpha subunit is responsible for the aldol cleavage of indoleglycerol phosphate to indole and glyceraldehyde 3-phosphate.</text>
</comment>
<comment type="catalytic activity">
    <reaction evidence="1">
        <text>(1S,2R)-1-C-(indol-3-yl)glycerol 3-phosphate + L-serine = D-glyceraldehyde 3-phosphate + L-tryptophan + H2O</text>
        <dbReference type="Rhea" id="RHEA:10532"/>
        <dbReference type="ChEBI" id="CHEBI:15377"/>
        <dbReference type="ChEBI" id="CHEBI:33384"/>
        <dbReference type="ChEBI" id="CHEBI:57912"/>
        <dbReference type="ChEBI" id="CHEBI:58866"/>
        <dbReference type="ChEBI" id="CHEBI:59776"/>
        <dbReference type="EC" id="4.2.1.20"/>
    </reaction>
</comment>
<comment type="pathway">
    <text evidence="1">Amino-acid biosynthesis; L-tryptophan biosynthesis; L-tryptophan from chorismate: step 5/5.</text>
</comment>
<comment type="subunit">
    <text evidence="1">Tetramer of two alpha and two beta chains.</text>
</comment>
<comment type="similarity">
    <text evidence="1">Belongs to the TrpA family.</text>
</comment>
<reference key="1">
    <citation type="journal article" date="2004" name="Proc. Natl. Acad. Sci. U.S.A.">
        <title>Complete genomes of two clinical Staphylococcus aureus strains: evidence for the rapid evolution of virulence and drug resistance.</title>
        <authorList>
            <person name="Holden M.T.G."/>
            <person name="Feil E.J."/>
            <person name="Lindsay J.A."/>
            <person name="Peacock S.J."/>
            <person name="Day N.P.J."/>
            <person name="Enright M.C."/>
            <person name="Foster T.J."/>
            <person name="Moore C.E."/>
            <person name="Hurst L."/>
            <person name="Atkin R."/>
            <person name="Barron A."/>
            <person name="Bason N."/>
            <person name="Bentley S.D."/>
            <person name="Chillingworth C."/>
            <person name="Chillingworth T."/>
            <person name="Churcher C."/>
            <person name="Clark L."/>
            <person name="Corton C."/>
            <person name="Cronin A."/>
            <person name="Doggett J."/>
            <person name="Dowd L."/>
            <person name="Feltwell T."/>
            <person name="Hance Z."/>
            <person name="Harris B."/>
            <person name="Hauser H."/>
            <person name="Holroyd S."/>
            <person name="Jagels K."/>
            <person name="James K.D."/>
            <person name="Lennard N."/>
            <person name="Line A."/>
            <person name="Mayes R."/>
            <person name="Moule S."/>
            <person name="Mungall K."/>
            <person name="Ormond D."/>
            <person name="Quail M.A."/>
            <person name="Rabbinowitsch E."/>
            <person name="Rutherford K.M."/>
            <person name="Sanders M."/>
            <person name="Sharp S."/>
            <person name="Simmonds M."/>
            <person name="Stevens K."/>
            <person name="Whitehead S."/>
            <person name="Barrell B.G."/>
            <person name="Spratt B.G."/>
            <person name="Parkhill J."/>
        </authorList>
    </citation>
    <scope>NUCLEOTIDE SEQUENCE [LARGE SCALE GENOMIC DNA]</scope>
    <source>
        <strain>MSSA476</strain>
    </source>
</reference>
<dbReference type="EC" id="4.2.1.20" evidence="1"/>
<dbReference type="EMBL" id="BX571857">
    <property type="protein sequence ID" value="CAG43090.1"/>
    <property type="molecule type" value="Genomic_DNA"/>
</dbReference>
<dbReference type="RefSeq" id="WP_000163627.1">
    <property type="nucleotide sequence ID" value="NC_002953.3"/>
</dbReference>
<dbReference type="SMR" id="Q6G9I6"/>
<dbReference type="KEGG" id="sas:SAS1313"/>
<dbReference type="HOGENOM" id="CLU_016734_0_0_9"/>
<dbReference type="UniPathway" id="UPA00035">
    <property type="reaction ID" value="UER00044"/>
</dbReference>
<dbReference type="GO" id="GO:0005829">
    <property type="term" value="C:cytosol"/>
    <property type="evidence" value="ECO:0007669"/>
    <property type="project" value="TreeGrafter"/>
</dbReference>
<dbReference type="GO" id="GO:0004834">
    <property type="term" value="F:tryptophan synthase activity"/>
    <property type="evidence" value="ECO:0007669"/>
    <property type="project" value="UniProtKB-UniRule"/>
</dbReference>
<dbReference type="CDD" id="cd04724">
    <property type="entry name" value="Tryptophan_synthase_alpha"/>
    <property type="match status" value="1"/>
</dbReference>
<dbReference type="Gene3D" id="3.20.20.70">
    <property type="entry name" value="Aldolase class I"/>
    <property type="match status" value="1"/>
</dbReference>
<dbReference type="HAMAP" id="MF_00131">
    <property type="entry name" value="Trp_synth_alpha"/>
    <property type="match status" value="1"/>
</dbReference>
<dbReference type="InterPro" id="IPR013785">
    <property type="entry name" value="Aldolase_TIM"/>
</dbReference>
<dbReference type="InterPro" id="IPR011060">
    <property type="entry name" value="RibuloseP-bd_barrel"/>
</dbReference>
<dbReference type="InterPro" id="IPR018204">
    <property type="entry name" value="Trp_synthase_alpha_AS"/>
</dbReference>
<dbReference type="InterPro" id="IPR002028">
    <property type="entry name" value="Trp_synthase_suA"/>
</dbReference>
<dbReference type="NCBIfam" id="TIGR00262">
    <property type="entry name" value="trpA"/>
    <property type="match status" value="1"/>
</dbReference>
<dbReference type="PANTHER" id="PTHR43406:SF1">
    <property type="entry name" value="TRYPTOPHAN SYNTHASE ALPHA CHAIN, CHLOROPLASTIC"/>
    <property type="match status" value="1"/>
</dbReference>
<dbReference type="PANTHER" id="PTHR43406">
    <property type="entry name" value="TRYPTOPHAN SYNTHASE, ALPHA CHAIN"/>
    <property type="match status" value="1"/>
</dbReference>
<dbReference type="Pfam" id="PF00290">
    <property type="entry name" value="Trp_syntA"/>
    <property type="match status" value="1"/>
</dbReference>
<dbReference type="SUPFAM" id="SSF51366">
    <property type="entry name" value="Ribulose-phoshate binding barrel"/>
    <property type="match status" value="1"/>
</dbReference>
<dbReference type="PROSITE" id="PS00167">
    <property type="entry name" value="TRP_SYNTHASE_ALPHA"/>
    <property type="match status" value="1"/>
</dbReference>
<feature type="chain" id="PRO_0000098847" description="Tryptophan synthase alpha chain">
    <location>
        <begin position="1"/>
        <end position="242"/>
    </location>
</feature>
<feature type="active site" description="Proton acceptor" evidence="1">
    <location>
        <position position="31"/>
    </location>
</feature>
<feature type="active site" description="Proton acceptor" evidence="1">
    <location>
        <position position="42"/>
    </location>
</feature>
<gene>
    <name evidence="1" type="primary">trpA</name>
    <name type="ordered locus">SAS1313</name>
</gene>
<name>TRPA_STAAS</name>
<evidence type="ECO:0000255" key="1">
    <source>
        <dbReference type="HAMAP-Rule" id="MF_00131"/>
    </source>
</evidence>
<protein>
    <recommendedName>
        <fullName evidence="1">Tryptophan synthase alpha chain</fullName>
        <ecNumber evidence="1">4.2.1.20</ecNumber>
    </recommendedName>
</protein>
<accession>Q6G9I6</accession>
<proteinExistence type="inferred from homology"/>
<organism>
    <name type="scientific">Staphylococcus aureus (strain MSSA476)</name>
    <dbReference type="NCBI Taxonomy" id="282459"/>
    <lineage>
        <taxon>Bacteria</taxon>
        <taxon>Bacillati</taxon>
        <taxon>Bacillota</taxon>
        <taxon>Bacilli</taxon>
        <taxon>Bacillales</taxon>
        <taxon>Staphylococcaceae</taxon>
        <taxon>Staphylococcus</taxon>
    </lineage>
</organism>
<keyword id="KW-0028">Amino-acid biosynthesis</keyword>
<keyword id="KW-0057">Aromatic amino acid biosynthesis</keyword>
<keyword id="KW-0456">Lyase</keyword>
<keyword id="KW-0822">Tryptophan biosynthesis</keyword>